<keyword id="KW-0025">Alternative splicing</keyword>
<keyword id="KW-0378">Hydrolase</keyword>
<keyword id="KW-0460">Magnesium</keyword>
<keyword id="KW-0479">Metal-binding</keyword>
<keyword id="KW-0495">Mineral balance</keyword>
<keyword id="KW-1267">Proteomics identification</keyword>
<keyword id="KW-1185">Reference proteome</keyword>
<dbReference type="EC" id="3.1.3.75" evidence="4"/>
<dbReference type="EMBL" id="AJ457189">
    <property type="protein sequence ID" value="CAD29803.1"/>
    <property type="molecule type" value="mRNA"/>
</dbReference>
<dbReference type="EMBL" id="AC004797">
    <property type="status" value="NOT_ANNOTATED_CDS"/>
    <property type="molecule type" value="Genomic_DNA"/>
</dbReference>
<dbReference type="EMBL" id="BC029931">
    <property type="status" value="NOT_ANNOTATED_CDS"/>
    <property type="molecule type" value="mRNA"/>
</dbReference>
<dbReference type="EMBL" id="BC117187">
    <property type="protein sequence ID" value="AAI17188.1"/>
    <property type="molecule type" value="mRNA"/>
</dbReference>
<dbReference type="CCDS" id="CCDS11547.1">
    <molecule id="Q8TCT1-1"/>
</dbReference>
<dbReference type="CCDS" id="CCDS45726.1">
    <molecule id="Q8TCT1-3"/>
</dbReference>
<dbReference type="RefSeq" id="NP_001137276.1">
    <molecule id="Q8TCT1-3"/>
    <property type="nucleotide sequence ID" value="NM_001143804.2"/>
</dbReference>
<dbReference type="RefSeq" id="NP_848595.1">
    <molecule id="Q8TCT1-1"/>
    <property type="nucleotide sequence ID" value="NM_178500.4"/>
</dbReference>
<dbReference type="RefSeq" id="XP_047291462.1">
    <molecule id="Q8TCT1-1"/>
    <property type="nucleotide sequence ID" value="XM_047435506.1"/>
</dbReference>
<dbReference type="RefSeq" id="XP_054171248.1">
    <molecule id="Q8TCT1-1"/>
    <property type="nucleotide sequence ID" value="XM_054315273.1"/>
</dbReference>
<dbReference type="SMR" id="Q8TCT1"/>
<dbReference type="BioGRID" id="127819">
    <property type="interactions" value="60"/>
</dbReference>
<dbReference type="FunCoup" id="Q8TCT1">
    <property type="interactions" value="330"/>
</dbReference>
<dbReference type="IntAct" id="Q8TCT1">
    <property type="interactions" value="56"/>
</dbReference>
<dbReference type="STRING" id="9606.ENSP00000406909"/>
<dbReference type="BindingDB" id="Q8TCT1"/>
<dbReference type="ChEMBL" id="CHEMBL6113"/>
<dbReference type="DrugBank" id="DB00122">
    <property type="generic name" value="Choline"/>
</dbReference>
<dbReference type="DrugCentral" id="Q8TCT1"/>
<dbReference type="DEPOD" id="PHOSPHO1"/>
<dbReference type="GlyGen" id="Q8TCT1">
    <property type="glycosylation" value="1 site, 1 O-linked glycan (1 site)"/>
</dbReference>
<dbReference type="iPTMnet" id="Q8TCT1"/>
<dbReference type="PhosphoSitePlus" id="Q8TCT1"/>
<dbReference type="BioMuta" id="PHOSPHO1"/>
<dbReference type="DMDM" id="74715842"/>
<dbReference type="MassIVE" id="Q8TCT1"/>
<dbReference type="PaxDb" id="9606-ENSP00000406909"/>
<dbReference type="PeptideAtlas" id="Q8TCT1"/>
<dbReference type="ProteomicsDB" id="19044"/>
<dbReference type="ProteomicsDB" id="74155">
    <molecule id="Q8TCT1-1"/>
</dbReference>
<dbReference type="ProteomicsDB" id="74156">
    <molecule id="Q8TCT1-2"/>
</dbReference>
<dbReference type="Antibodypedia" id="30368">
    <property type="antibodies" value="151 antibodies from 21 providers"/>
</dbReference>
<dbReference type="DNASU" id="162466"/>
<dbReference type="Ensembl" id="ENST00000310544.9">
    <molecule id="Q8TCT1-1"/>
    <property type="protein sequence ID" value="ENSP00000311925.4"/>
    <property type="gene ID" value="ENSG00000173868.12"/>
</dbReference>
<dbReference type="Ensembl" id="ENST00000413580.5">
    <molecule id="Q8TCT1-3"/>
    <property type="protein sequence ID" value="ENSP00000406909.1"/>
    <property type="gene ID" value="ENSG00000173868.12"/>
</dbReference>
<dbReference type="Ensembl" id="ENST00000514112.1">
    <molecule id="Q8TCT1-3"/>
    <property type="protein sequence ID" value="ENSP00000427694.1"/>
    <property type="gene ID" value="ENSG00000173868.12"/>
</dbReference>
<dbReference type="GeneID" id="162466"/>
<dbReference type="KEGG" id="hsa:162466"/>
<dbReference type="MANE-Select" id="ENST00000310544.9">
    <property type="protein sequence ID" value="ENSP00000311925.4"/>
    <property type="RefSeq nucleotide sequence ID" value="NM_178500.4"/>
    <property type="RefSeq protein sequence ID" value="NP_848595.1"/>
</dbReference>
<dbReference type="UCSC" id="uc002ios.2">
    <molecule id="Q8TCT1-1"/>
    <property type="organism name" value="human"/>
</dbReference>
<dbReference type="AGR" id="HGNC:16815"/>
<dbReference type="CTD" id="162466"/>
<dbReference type="DisGeNET" id="162466"/>
<dbReference type="GeneCards" id="PHOSPHO1"/>
<dbReference type="HGNC" id="HGNC:16815">
    <property type="gene designation" value="PHOSPHO1"/>
</dbReference>
<dbReference type="HPA" id="ENSG00000173868">
    <property type="expression patterns" value="Tissue enriched (testis)"/>
</dbReference>
<dbReference type="neXtProt" id="NX_Q8TCT1"/>
<dbReference type="OpenTargets" id="ENSG00000173868"/>
<dbReference type="PharmGKB" id="PA33276"/>
<dbReference type="VEuPathDB" id="HostDB:ENSG00000173868"/>
<dbReference type="eggNOG" id="KOG3120">
    <property type="taxonomic scope" value="Eukaryota"/>
</dbReference>
<dbReference type="GeneTree" id="ENSGT00390000007741"/>
<dbReference type="HOGENOM" id="CLU_068983_0_1_1"/>
<dbReference type="InParanoid" id="Q8TCT1"/>
<dbReference type="OMA" id="FHSHECQ"/>
<dbReference type="OrthoDB" id="10267182at2759"/>
<dbReference type="PAN-GO" id="Q8TCT1">
    <property type="GO annotations" value="2 GO annotations based on evolutionary models"/>
</dbReference>
<dbReference type="PhylomeDB" id="Q8TCT1"/>
<dbReference type="TreeFam" id="TF300112"/>
<dbReference type="BioCyc" id="MetaCyc:HS16266-MONOMER"/>
<dbReference type="BRENDA" id="3.1.3.75">
    <property type="organism ID" value="2681"/>
</dbReference>
<dbReference type="PathwayCommons" id="Q8TCT1"/>
<dbReference type="Reactome" id="R-HSA-1483191">
    <property type="pathway name" value="Synthesis of PC"/>
</dbReference>
<dbReference type="Reactome" id="R-HSA-1483213">
    <property type="pathway name" value="Synthesis of PE"/>
</dbReference>
<dbReference type="SignaLink" id="Q8TCT1"/>
<dbReference type="BioGRID-ORCS" id="162466">
    <property type="hits" value="8 hits in 1153 CRISPR screens"/>
</dbReference>
<dbReference type="GenomeRNAi" id="162466"/>
<dbReference type="Pharos" id="Q8TCT1">
    <property type="development level" value="Tchem"/>
</dbReference>
<dbReference type="PRO" id="PR:Q8TCT1"/>
<dbReference type="Proteomes" id="UP000005640">
    <property type="component" value="Chromosome 17"/>
</dbReference>
<dbReference type="RNAct" id="Q8TCT1">
    <property type="molecule type" value="protein"/>
</dbReference>
<dbReference type="Bgee" id="ENSG00000173868">
    <property type="expression patterns" value="Expressed in male germ line stem cell (sensu Vertebrata) in testis and 94 other cell types or tissues"/>
</dbReference>
<dbReference type="ExpressionAtlas" id="Q8TCT1">
    <property type="expression patterns" value="baseline and differential"/>
</dbReference>
<dbReference type="GO" id="GO:0005829">
    <property type="term" value="C:cytosol"/>
    <property type="evidence" value="ECO:0000304"/>
    <property type="project" value="Reactome"/>
</dbReference>
<dbReference type="GO" id="GO:0031012">
    <property type="term" value="C:extracellular matrix"/>
    <property type="evidence" value="ECO:0007669"/>
    <property type="project" value="Ensembl"/>
</dbReference>
<dbReference type="GO" id="GO:0065010">
    <property type="term" value="C:extracellular membrane-bounded organelle"/>
    <property type="evidence" value="ECO:0000250"/>
    <property type="project" value="UniProtKB"/>
</dbReference>
<dbReference type="GO" id="GO:0046872">
    <property type="term" value="F:metal ion binding"/>
    <property type="evidence" value="ECO:0007669"/>
    <property type="project" value="UniProtKB-KW"/>
</dbReference>
<dbReference type="GO" id="GO:0016791">
    <property type="term" value="F:phosphatase activity"/>
    <property type="evidence" value="ECO:0000318"/>
    <property type="project" value="GO_Central"/>
</dbReference>
<dbReference type="GO" id="GO:0052731">
    <property type="term" value="F:phosphocholine phosphatase activity"/>
    <property type="evidence" value="ECO:0000314"/>
    <property type="project" value="UniProtKB"/>
</dbReference>
<dbReference type="GO" id="GO:0052732">
    <property type="term" value="F:phosphoethanolamine phosphatase activity"/>
    <property type="evidence" value="ECO:0000314"/>
    <property type="project" value="UniProtKB"/>
</dbReference>
<dbReference type="GO" id="GO:0016462">
    <property type="term" value="F:pyrophosphatase activity"/>
    <property type="evidence" value="ECO:0000314"/>
    <property type="project" value="MGI"/>
</dbReference>
<dbReference type="GO" id="GO:0030282">
    <property type="term" value="P:bone mineralization"/>
    <property type="evidence" value="ECO:0000250"/>
    <property type="project" value="UniProtKB"/>
</dbReference>
<dbReference type="GO" id="GO:0035630">
    <property type="term" value="P:bone mineralization involved in bone maturation"/>
    <property type="evidence" value="ECO:0000318"/>
    <property type="project" value="GO_Central"/>
</dbReference>
<dbReference type="GO" id="GO:0001958">
    <property type="term" value="P:endochondral ossification"/>
    <property type="evidence" value="ECO:0007669"/>
    <property type="project" value="Ensembl"/>
</dbReference>
<dbReference type="GO" id="GO:0030500">
    <property type="term" value="P:regulation of bone mineralization"/>
    <property type="evidence" value="ECO:0007669"/>
    <property type="project" value="UniProtKB-KW"/>
</dbReference>
<dbReference type="CDD" id="cd16418">
    <property type="entry name" value="HAD_Pase"/>
    <property type="match status" value="1"/>
</dbReference>
<dbReference type="FunFam" id="3.40.50.1000:FF:000097">
    <property type="entry name" value="phosphoethanolamine/phosphocholine phosphatase isoform X2"/>
    <property type="match status" value="1"/>
</dbReference>
<dbReference type="Gene3D" id="3.40.50.1000">
    <property type="entry name" value="HAD superfamily/HAD-like"/>
    <property type="match status" value="1"/>
</dbReference>
<dbReference type="InterPro" id="IPR036412">
    <property type="entry name" value="HAD-like_sf"/>
</dbReference>
<dbReference type="InterPro" id="IPR006384">
    <property type="entry name" value="HAD_hydro_PyrdxlP_Pase-like"/>
</dbReference>
<dbReference type="InterPro" id="IPR023214">
    <property type="entry name" value="HAD_sf"/>
</dbReference>
<dbReference type="InterPro" id="IPR016965">
    <property type="entry name" value="Pase_PHOSPHO-typ"/>
</dbReference>
<dbReference type="NCBIfam" id="TIGR01489">
    <property type="entry name" value="DKMTPPase-SF"/>
    <property type="match status" value="1"/>
</dbReference>
<dbReference type="NCBIfam" id="TIGR01488">
    <property type="entry name" value="HAD-SF-IB"/>
    <property type="match status" value="1"/>
</dbReference>
<dbReference type="PANTHER" id="PTHR20889">
    <property type="entry name" value="PHOSPHATASE, ORPHAN 1, 2"/>
    <property type="match status" value="1"/>
</dbReference>
<dbReference type="PANTHER" id="PTHR20889:SF2">
    <property type="entry name" value="PHOSPHOETHANOLAMINE_PHOSPHOCHOLINE PHOSPHATASE"/>
    <property type="match status" value="1"/>
</dbReference>
<dbReference type="Pfam" id="PF06888">
    <property type="entry name" value="Put_Phosphatase"/>
    <property type="match status" value="1"/>
</dbReference>
<dbReference type="PIRSF" id="PIRSF031051">
    <property type="entry name" value="PyrdxlP_Pase_PHOSPHO2"/>
    <property type="match status" value="1"/>
</dbReference>
<dbReference type="SUPFAM" id="SSF56784">
    <property type="entry name" value="HAD-like"/>
    <property type="match status" value="1"/>
</dbReference>
<evidence type="ECO:0000250" key="1">
    <source>
        <dbReference type="UniProtKB" id="Q8R2H9"/>
    </source>
</evidence>
<evidence type="ECO:0000250" key="2">
    <source>
        <dbReference type="UniProtKB" id="Q96GD0"/>
    </source>
</evidence>
<evidence type="ECO:0000269" key="3">
    <source>
    </source>
</evidence>
<evidence type="ECO:0000269" key="4">
    <source>
    </source>
</evidence>
<evidence type="ECO:0000269" key="5">
    <source>
    </source>
</evidence>
<evidence type="ECO:0000303" key="6">
    <source>
    </source>
</evidence>
<evidence type="ECO:0000303" key="7">
    <source>
    </source>
</evidence>
<evidence type="ECO:0000303" key="8">
    <source>
    </source>
</evidence>
<evidence type="ECO:0000305" key="9"/>
<evidence type="ECO:0000305" key="10">
    <source>
    </source>
</evidence>
<evidence type="ECO:0000312" key="11">
    <source>
        <dbReference type="HGNC" id="HGNC:16815"/>
    </source>
</evidence>
<accession>Q8TCT1</accession>
<accession>E9PAM0</accession>
<accession>Q17RU6</accession>
<reference key="1">
    <citation type="journal article" date="2002" name="Anim. Genet.">
        <title>Chromosomal localization of the chicken and mammalian orthologues of the orphan phosphatase PHOSPHO1 gene.</title>
        <authorList>
            <person name="Houston B."/>
            <person name="Paton I.R."/>
            <person name="Burt D.W."/>
            <person name="Farquharson C."/>
        </authorList>
    </citation>
    <scope>NUCLEOTIDE SEQUENCE [MRNA] (ISOFORM 1)</scope>
</reference>
<reference key="2">
    <citation type="journal article" date="2008" name="Biochem. Biophys. Res. Commun.">
        <title>Identification of a novel splice variant of the haloacid dehalogenase: PHOSPHO1.</title>
        <authorList>
            <person name="Roberts S.J."/>
            <person name="Owen H.C."/>
            <person name="Farquharson C."/>
        </authorList>
    </citation>
    <scope>NUCLEOTIDE SEQUENCE [MRNA] (ISOFORM 2)</scope>
    <scope>ALTERNATIVE SPLICING</scope>
</reference>
<reference key="3">
    <citation type="journal article" date="2006" name="Nature">
        <title>DNA sequence of human chromosome 17 and analysis of rearrangement in the human lineage.</title>
        <authorList>
            <person name="Zody M.C."/>
            <person name="Garber M."/>
            <person name="Adams D.J."/>
            <person name="Sharpe T."/>
            <person name="Harrow J."/>
            <person name="Lupski J.R."/>
            <person name="Nicholson C."/>
            <person name="Searle S.M."/>
            <person name="Wilming L."/>
            <person name="Young S.K."/>
            <person name="Abouelleil A."/>
            <person name="Allen N.R."/>
            <person name="Bi W."/>
            <person name="Bloom T."/>
            <person name="Borowsky M.L."/>
            <person name="Bugalter B.E."/>
            <person name="Butler J."/>
            <person name="Chang J.L."/>
            <person name="Chen C.-K."/>
            <person name="Cook A."/>
            <person name="Corum B."/>
            <person name="Cuomo C.A."/>
            <person name="de Jong P.J."/>
            <person name="DeCaprio D."/>
            <person name="Dewar K."/>
            <person name="FitzGerald M."/>
            <person name="Gilbert J."/>
            <person name="Gibson R."/>
            <person name="Gnerre S."/>
            <person name="Goldstein S."/>
            <person name="Grafham D.V."/>
            <person name="Grocock R."/>
            <person name="Hafez N."/>
            <person name="Hagopian D.S."/>
            <person name="Hart E."/>
            <person name="Norman C.H."/>
            <person name="Humphray S."/>
            <person name="Jaffe D.B."/>
            <person name="Jones M."/>
            <person name="Kamal M."/>
            <person name="Khodiyar V.K."/>
            <person name="LaButti K."/>
            <person name="Laird G."/>
            <person name="Lehoczky J."/>
            <person name="Liu X."/>
            <person name="Lokyitsang T."/>
            <person name="Loveland J."/>
            <person name="Lui A."/>
            <person name="Macdonald P."/>
            <person name="Major J.E."/>
            <person name="Matthews L."/>
            <person name="Mauceli E."/>
            <person name="McCarroll S.A."/>
            <person name="Mihalev A.H."/>
            <person name="Mudge J."/>
            <person name="Nguyen C."/>
            <person name="Nicol R."/>
            <person name="O'Leary S.B."/>
            <person name="Osoegawa K."/>
            <person name="Schwartz D.C."/>
            <person name="Shaw-Smith C."/>
            <person name="Stankiewicz P."/>
            <person name="Steward C."/>
            <person name="Swarbreck D."/>
            <person name="Venkataraman V."/>
            <person name="Whittaker C.A."/>
            <person name="Yang X."/>
            <person name="Zimmer A.R."/>
            <person name="Bradley A."/>
            <person name="Hubbard T."/>
            <person name="Birren B.W."/>
            <person name="Rogers J."/>
            <person name="Lander E.S."/>
            <person name="Nusbaum C."/>
        </authorList>
    </citation>
    <scope>NUCLEOTIDE SEQUENCE [LARGE SCALE GENOMIC DNA]</scope>
</reference>
<reference key="4">
    <citation type="journal article" date="2004" name="Genome Res.">
        <title>The status, quality, and expansion of the NIH full-length cDNA project: the Mammalian Gene Collection (MGC).</title>
        <authorList>
            <consortium name="The MGC Project Team"/>
        </authorList>
    </citation>
    <scope>NUCLEOTIDE SEQUENCE [LARGE SCALE MRNA] (ISOFORM 1)</scope>
    <scope>NUCLEOTIDE SEQUENCE [LARGE SCALE MRNA] OF 1-111 (ISOFORM 3)</scope>
    <source>
        <tissue>Colon</tissue>
        <tissue>Medulla oblongata</tissue>
    </source>
</reference>
<reference key="5">
    <citation type="journal article" date="2004" name="Biochem. J.">
        <title>Human PHOSPHO1 exhibits high specific phosphoethanolamine and phosphocholine phosphatase activities.</title>
        <authorList>
            <person name="Roberts S.J."/>
            <person name="Stewart A.J."/>
            <person name="Sadler P.J."/>
            <person name="Farquharson C."/>
        </authorList>
    </citation>
    <scope>FUNCTION</scope>
    <scope>CATALYTIC ACTIVITY</scope>
    <scope>COFACTOR</scope>
    <scope>BIOPHYSICOCHEMICAL PROPERTIES</scope>
</reference>
<reference key="6">
    <citation type="journal article" date="2004" name="Bone">
        <title>PHOSPHO1 -- a novel phosphatase specifically expressed at sites of mineralisation in bone and cartilage.</title>
        <authorList>
            <person name="Houston B."/>
            <person name="Stewart A.J."/>
            <person name="Farquharson C."/>
        </authorList>
    </citation>
    <scope>TISSUE SPECIFICITY</scope>
</reference>
<reference key="7">
    <citation type="journal article" date="2003" name="Protein Eng.">
        <title>Comparative modelling of human PHOSPHO1 reveals a new group of phosphatases within the haloacid dehalogenase superfamily.</title>
        <authorList>
            <person name="Stewart A.J."/>
            <person name="Schmid R."/>
            <person name="Blindauer C.A."/>
            <person name="Paisey S.J."/>
            <person name="Farquharson C."/>
        </authorList>
    </citation>
    <scope>SIMILARITY TO HAD-LIKE HYDROLASE SUPERFAMILY</scope>
</reference>
<reference key="8">
    <citation type="journal article" date="2005" name="Biochim. Biophys. Acta">
        <title>Probing the substrate specificities of human PHOSPHO1 and PHOSPHO2.</title>
        <authorList>
            <person name="Roberts S.J."/>
            <person name="Stewart A.J."/>
            <person name="Schmid R."/>
            <person name="Blindauer C.A."/>
            <person name="Bond S.R."/>
            <person name="Sadler P.J."/>
            <person name="Farquharson C."/>
        </authorList>
    </citation>
    <scope>MUTAGENESIS OF ASP-32; ASP-43; ASP-123 AND ASP-203</scope>
    <scope>ACTIVE SITE</scope>
</reference>
<gene>
    <name evidence="6 11" type="primary">PHOSPHO1</name>
</gene>
<organism>
    <name type="scientific">Homo sapiens</name>
    <name type="common">Human</name>
    <dbReference type="NCBI Taxonomy" id="9606"/>
    <lineage>
        <taxon>Eukaryota</taxon>
        <taxon>Metazoa</taxon>
        <taxon>Chordata</taxon>
        <taxon>Craniata</taxon>
        <taxon>Vertebrata</taxon>
        <taxon>Euteleostomi</taxon>
        <taxon>Mammalia</taxon>
        <taxon>Eutheria</taxon>
        <taxon>Euarchontoglires</taxon>
        <taxon>Primates</taxon>
        <taxon>Haplorrhini</taxon>
        <taxon>Catarrhini</taxon>
        <taxon>Hominidae</taxon>
        <taxon>Homo</taxon>
    </lineage>
</organism>
<comment type="function">
    <text evidence="1 4">Phosphatase that has a high activity toward phosphoethanolamine (PEA) and phosphocholine (PCho) (PubMed:15175005). Involved in the generation of inorganic phosphate for bone mineralization (By similarity). Acts in a non-redundant manner with PHOSPHO1 in skeletal mineralization: while PHOSPHO1 mediates the initiation of hydroxyapatite crystallization in the matrix vesicles (MVs), ALPL/TNAP catalyzes the spread of hydroxyapatite crystallization in the extracellular matrix (By similarity).</text>
</comment>
<comment type="catalytic activity">
    <reaction evidence="4">
        <text>phosphoethanolamine + H2O = ethanolamine + phosphate</text>
        <dbReference type="Rhea" id="RHEA:16089"/>
        <dbReference type="ChEBI" id="CHEBI:15377"/>
        <dbReference type="ChEBI" id="CHEBI:43474"/>
        <dbReference type="ChEBI" id="CHEBI:57603"/>
        <dbReference type="ChEBI" id="CHEBI:58190"/>
        <dbReference type="EC" id="3.1.3.75"/>
    </reaction>
</comment>
<comment type="catalytic activity">
    <reaction evidence="4">
        <text>phosphocholine + H2O = choline + phosphate</text>
        <dbReference type="Rhea" id="RHEA:10492"/>
        <dbReference type="ChEBI" id="CHEBI:15354"/>
        <dbReference type="ChEBI" id="CHEBI:15377"/>
        <dbReference type="ChEBI" id="CHEBI:43474"/>
        <dbReference type="ChEBI" id="CHEBI:295975"/>
        <dbReference type="EC" id="3.1.3.75"/>
    </reaction>
</comment>
<comment type="cofactor">
    <cofactor evidence="4">
        <name>Mg(2+)</name>
        <dbReference type="ChEBI" id="CHEBI:18420"/>
    </cofactor>
</comment>
<comment type="biophysicochemical properties">
    <kinetics>
        <KM evidence="4">3 uM for PEA</KM>
        <KM evidence="4">11.4 uM for PCho</KM>
    </kinetics>
    <phDependence>
        <text evidence="4">Optimum pH is 6.7.</text>
    </phDependence>
</comment>
<comment type="interaction">
    <interactant intactId="EBI-14017370">
        <id>Q8TCT1</id>
    </interactant>
    <interactant intactId="EBI-742064">
        <id>Q03154</id>
        <label>ACY1</label>
    </interactant>
    <organismsDiffer>false</organismsDiffer>
    <experiments>2</experiments>
</comment>
<comment type="interaction">
    <interactant intactId="EBI-14017370">
        <id>Q8TCT1</id>
    </interactant>
    <interactant intactId="EBI-10976415">
        <id>Q8NHQ8-2</id>
        <label>RASSF8</label>
    </interactant>
    <organismsDiffer>false</organismsDiffer>
    <experiments>3</experiments>
</comment>
<comment type="subcellular location">
    <subcellularLocation>
        <location evidence="1">Extracellular vesicle</location>
    </subcellularLocation>
    <text evidence="1">Localizes to special class of extracellular vesicles, named matrix vesicles (MVs), which are released by osteogenic cells.</text>
</comment>
<comment type="alternative products">
    <event type="alternative splicing"/>
    <isoform>
        <id>Q8TCT1-1</id>
        <name>1</name>
        <sequence type="displayed"/>
    </isoform>
    <isoform>
        <id>Q8TCT1-2</id>
        <name>2</name>
        <name>PHOSPHO1-3a</name>
        <sequence type="described" ref="VSP_040624"/>
    </isoform>
    <isoform>
        <id>Q8TCT1-3</id>
        <name>3</name>
        <sequence type="described" ref="VSP_045709"/>
    </isoform>
</comment>
<comment type="tissue specificity">
    <text evidence="3">Expressed at sites of mineralization in bone and cartilage. Highly expressed in osteoblast cell line SaOS-2 which produces a mineralized matrix, but not in MG-63 cell line, which do not mineralize.</text>
</comment>
<comment type="similarity">
    <text evidence="9">Belongs to the HAD-like hydrolase superfamily. PHOSPHO family.</text>
</comment>
<name>PHOP1_HUMAN</name>
<protein>
    <recommendedName>
        <fullName>Phosphoethanolamine/phosphocholine phosphatase</fullName>
        <ecNumber evidence="4">3.1.3.75</ecNumber>
    </recommendedName>
</protein>
<feature type="chain" id="PRO_0000068829" description="Phosphoethanolamine/phosphocholine phosphatase">
    <location>
        <begin position="1"/>
        <end position="267"/>
    </location>
</feature>
<feature type="active site" description="Nucleophile" evidence="10">
    <location>
        <position position="32"/>
    </location>
</feature>
<feature type="active site" description="Proton donor" evidence="2">
    <location>
        <position position="34"/>
    </location>
</feature>
<feature type="binding site" evidence="2">
    <location>
        <position position="32"/>
    </location>
    <ligand>
        <name>Mg(2+)</name>
        <dbReference type="ChEBI" id="CHEBI:18420"/>
    </ligand>
</feature>
<feature type="binding site" evidence="2">
    <location>
        <position position="34"/>
    </location>
    <ligand>
        <name>Mg(2+)</name>
        <dbReference type="ChEBI" id="CHEBI:18420"/>
    </ligand>
</feature>
<feature type="binding site" evidence="10">
    <location>
        <position position="43"/>
    </location>
    <ligand>
        <name>substrate</name>
    </ligand>
</feature>
<feature type="binding site" evidence="10">
    <location>
        <position position="123"/>
    </location>
    <ligand>
        <name>substrate</name>
    </ligand>
</feature>
<feature type="binding site" evidence="2">
    <location>
        <position position="203"/>
    </location>
    <ligand>
        <name>Mg(2+)</name>
        <dbReference type="ChEBI" id="CHEBI:18420"/>
    </ligand>
</feature>
<feature type="splice variant" id="VSP_040624" description="In isoform 2." evidence="8">
    <original>MSGCFPVSGLRCLSR</original>
    <variation>MCQRLWPANQPLPGGLLPRPLSLAPSSSSSCCSPPCSQ</variation>
    <location>
        <begin position="1"/>
        <end position="15"/>
    </location>
</feature>
<feature type="splice variant" id="VSP_045709" description="In isoform 3." evidence="7">
    <original>MSGCFPVSGLRCLSR</original>
    <variation>MCQRLWPWPANQPLPGGLLPRPLSLAPSSSSSCCSPPCSQ</variation>
    <location>
        <begin position="1"/>
        <end position="15"/>
    </location>
</feature>
<feature type="mutagenesis site" description="Abolishes phosphatase activity." evidence="5">
    <original>D</original>
    <variation>N</variation>
    <location>
        <position position="32"/>
    </location>
</feature>
<feature type="mutagenesis site" description="Strongly reduces reactivity toward PEA and PCho substrates. Abolishes phosphatase activity; when associated with N-123." evidence="5">
    <original>D</original>
    <variation>N</variation>
    <location>
        <position position="43"/>
    </location>
</feature>
<feature type="mutagenesis site" description="Strongly reduces reactivity toward PEA and PCho substrates. Abolishes phosphatase activity; when associated with N-43." evidence="5">
    <original>D</original>
    <variation>N</variation>
    <location>
        <position position="123"/>
    </location>
</feature>
<feature type="mutagenesis site" description="Abolishes phosphatase activity." evidence="5">
    <original>D</original>
    <variation>S</variation>
    <location>
        <position position="203"/>
    </location>
</feature>
<sequence length="267" mass="29713">MSGCFPVSGLRCLSRDGRMAAQGAPRFLLTFDFDETIVDENSDDSIVRAAPGQRLPESLRATYREGFYNEYMQRVFKYLGEQGVRPRDLSAIYEAIPLSPGMSDLLQFVAKQGACFEVILISDANTFGVESSLRAAGHHSLFRRILSNPSGPDARGLLALRPFHTHSCARCPANMCKHKVLSDYLRERAHDGVHFERLFYVGDGANDFCPMGLLAGGDVAFPRRGYPMHRLIQEAQKAEPSSFRASVVPWETAADVRLHLQQVLKSC</sequence>
<proteinExistence type="evidence at protein level"/>